<comment type="developmental stage">
    <text evidence="1">Expressed in late sporogonial stages.</text>
</comment>
<organism>
    <name type="scientific">Encephalitozoon cuniculi (strain GB-M1)</name>
    <name type="common">Microsporidian parasite</name>
    <dbReference type="NCBI Taxonomy" id="284813"/>
    <lineage>
        <taxon>Eukaryota</taxon>
        <taxon>Fungi</taxon>
        <taxon>Fungi incertae sedis</taxon>
        <taxon>Microsporidia</taxon>
        <taxon>Unikaryonidae</taxon>
        <taxon>Encephalitozoon</taxon>
    </lineage>
</organism>
<reference key="1">
    <citation type="journal article" date="2001" name="Nature">
        <title>Genome sequence and gene compaction of the eukaryote parasite Encephalitozoon cuniculi.</title>
        <authorList>
            <person name="Katinka M.D."/>
            <person name="Duprat S."/>
            <person name="Cornillot E."/>
            <person name="Metenier G."/>
            <person name="Thomarat F."/>
            <person name="Prensier G."/>
            <person name="Barbe V."/>
            <person name="Peyretaillade E."/>
            <person name="Brottier P."/>
            <person name="Wincker P."/>
            <person name="Delbac F."/>
            <person name="El Alaoui H."/>
            <person name="Peyret P."/>
            <person name="Saurin W."/>
            <person name="Gouy M."/>
            <person name="Weissenbach J."/>
            <person name="Vivares C.P."/>
        </authorList>
    </citation>
    <scope>NUCLEOTIDE SEQUENCE [LARGE SCALE GENOMIC DNA]</scope>
    <source>
        <strain>GB-M1</strain>
    </source>
</reference>
<reference key="2">
    <citation type="journal article" date="2009" name="BMC Genomics">
        <title>Identification of transcriptional signals in Encephalitozoon cuniculi widespread among Microsporidia phylum: support for accurate structural genome annotation.</title>
        <authorList>
            <person name="Peyretaillade E."/>
            <person name="Goncalves O."/>
            <person name="Terrat S."/>
            <person name="Dugat-Bony E."/>
            <person name="Wincker P."/>
            <person name="Cornman R.S."/>
            <person name="Evans J.D."/>
            <person name="Delbac F."/>
            <person name="Peyret P."/>
        </authorList>
    </citation>
    <scope>GENOME REANNOTATION</scope>
    <source>
        <strain>GB-M1</strain>
    </source>
</reference>
<reference key="3">
    <citation type="journal article" date="2006" name="Proteomics">
        <title>Proteomic analysis of the eukaryotic parasite Encephalitozoon cuniculi (microsporidia): a reference map for proteins expressed in late sporogonial stages.</title>
        <authorList>
            <person name="Brosson D."/>
            <person name="Kuhn L."/>
            <person name="Delbac F."/>
            <person name="Garin J."/>
            <person name="Vivares C.P."/>
            <person name="Texier C."/>
        </authorList>
    </citation>
    <scope>IDENTIFICATION BY MASS SPECTROMETRY [LARGE SCALE ANALYSIS]</scope>
    <scope>DEVELOPMENTAL STAGE</scope>
</reference>
<proteinExistence type="evidence at protein level"/>
<protein>
    <recommendedName>
        <fullName>Uncharacterized protein ECU09_1400</fullName>
    </recommendedName>
</protein>
<gene>
    <name type="ordered locus">ECU09_1400</name>
</gene>
<sequence>MVATNDSEAPQKILYESLCTVEAENLSEACNNAIEGRRAPAGRKAQVMRFIGEMCCCGDMFGTDTSINESVFSAMTYIEKNAWNVKDVFISPESEENVSNCVKLLELNEKIDYSAVHLKDIAMGLRIYVEQNMRNIIPLNVRKRVIEAYGSNDGEMKETIIPRIPFVVGDPHRLFLKSLKNIFLTIEMNAEDNGVNVEEIYRIFGPLVIRRPENMLETDTEVLRQILVDLMKADFDEFPSSFYL</sequence>
<keyword id="KW-1185">Reference proteome</keyword>
<dbReference type="EMBL" id="AL590451">
    <property type="protein sequence ID" value="CAD27112.2"/>
    <property type="molecule type" value="Genomic_DNA"/>
</dbReference>
<dbReference type="RefSeq" id="NP_001402393.1">
    <property type="nucleotide sequence ID" value="NM_001415453.1"/>
</dbReference>
<dbReference type="RefSeq" id="XP_955693.1">
    <property type="nucleotide sequence ID" value="XM_950600.1"/>
</dbReference>
<dbReference type="SMR" id="Q8STP1"/>
<dbReference type="GeneID" id="860479"/>
<dbReference type="VEuPathDB" id="MicrosporidiaDB:ECU09_1400"/>
<dbReference type="HOGENOM" id="CLU_1137992_0_0_1"/>
<dbReference type="InParanoid" id="Q8STP1"/>
<dbReference type="OrthoDB" id="3196451at2759"/>
<dbReference type="Proteomes" id="UP000000819">
    <property type="component" value="Chromosome IX"/>
</dbReference>
<dbReference type="GO" id="GO:0007165">
    <property type="term" value="P:signal transduction"/>
    <property type="evidence" value="ECO:0007669"/>
    <property type="project" value="InterPro"/>
</dbReference>
<dbReference type="CDD" id="cd00159">
    <property type="entry name" value="RhoGAP"/>
    <property type="match status" value="1"/>
</dbReference>
<dbReference type="Gene3D" id="1.10.555.10">
    <property type="entry name" value="Rho GTPase activation protein"/>
    <property type="match status" value="1"/>
</dbReference>
<dbReference type="InterPro" id="IPR008936">
    <property type="entry name" value="Rho_GTPase_activation_prot"/>
</dbReference>
<dbReference type="InterPro" id="IPR000198">
    <property type="entry name" value="RhoGAP_dom"/>
</dbReference>
<dbReference type="Pfam" id="PF00620">
    <property type="entry name" value="RhoGAP"/>
    <property type="match status" value="1"/>
</dbReference>
<dbReference type="SUPFAM" id="SSF48350">
    <property type="entry name" value="GTPase activation domain, GAP"/>
    <property type="match status" value="1"/>
</dbReference>
<name>Y9E0_ENCCU</name>
<accession>Q8STP1</accession>
<evidence type="ECO:0000269" key="1">
    <source>
    </source>
</evidence>
<feature type="chain" id="PRO_0000382781" description="Uncharacterized protein ECU09_1400">
    <location>
        <begin position="1"/>
        <end position="244"/>
    </location>
</feature>